<organism>
    <name type="scientific">Saccharomyces cerevisiae (strain ATCC 204508 / S288c)</name>
    <name type="common">Baker's yeast</name>
    <dbReference type="NCBI Taxonomy" id="559292"/>
    <lineage>
        <taxon>Eukaryota</taxon>
        <taxon>Fungi</taxon>
        <taxon>Dikarya</taxon>
        <taxon>Ascomycota</taxon>
        <taxon>Saccharomycotina</taxon>
        <taxon>Saccharomycetes</taxon>
        <taxon>Saccharomycetales</taxon>
        <taxon>Saccharomycetaceae</taxon>
        <taxon>Saccharomyces</taxon>
    </lineage>
</organism>
<gene>
    <name type="ordered locus">YBR056W-A</name>
</gene>
<feature type="chain" id="PRO_0000419187" description="Uncharacterized protein YBR056W-A">
    <location>
        <begin position="1"/>
        <end position="66"/>
    </location>
</feature>
<proteinExistence type="predicted"/>
<accession>I2HB52</accession>
<reference key="1">
    <citation type="journal article" date="1994" name="EMBO J.">
        <title>Complete DNA sequence of yeast chromosome II.</title>
        <authorList>
            <person name="Feldmann H."/>
            <person name="Aigle M."/>
            <person name="Aljinovic G."/>
            <person name="Andre B."/>
            <person name="Baclet M.C."/>
            <person name="Barthe C."/>
            <person name="Baur A."/>
            <person name="Becam A.-M."/>
            <person name="Biteau N."/>
            <person name="Boles E."/>
            <person name="Brandt T."/>
            <person name="Brendel M."/>
            <person name="Brueckner M."/>
            <person name="Bussereau F."/>
            <person name="Christiansen C."/>
            <person name="Contreras R."/>
            <person name="Crouzet M."/>
            <person name="Cziepluch C."/>
            <person name="Demolis N."/>
            <person name="Delaveau T."/>
            <person name="Doignon F."/>
            <person name="Domdey H."/>
            <person name="Duesterhus S."/>
            <person name="Dubois E."/>
            <person name="Dujon B."/>
            <person name="El Bakkoury M."/>
            <person name="Entian K.-D."/>
            <person name="Feuermann M."/>
            <person name="Fiers W."/>
            <person name="Fobo G.M."/>
            <person name="Fritz C."/>
            <person name="Gassenhuber J."/>
            <person name="Glansdorff N."/>
            <person name="Goffeau A."/>
            <person name="Grivell L.A."/>
            <person name="de Haan M."/>
            <person name="Hein C."/>
            <person name="Herbert C.J."/>
            <person name="Hollenberg C.P."/>
            <person name="Holmstroem K."/>
            <person name="Jacq C."/>
            <person name="Jacquet M."/>
            <person name="Jauniaux J.-C."/>
            <person name="Jonniaux J.-L."/>
            <person name="Kallesoee T."/>
            <person name="Kiesau P."/>
            <person name="Kirchrath L."/>
            <person name="Koetter P."/>
            <person name="Korol S."/>
            <person name="Liebl S."/>
            <person name="Logghe M."/>
            <person name="Lohan A.J.E."/>
            <person name="Louis E.J."/>
            <person name="Li Z.Y."/>
            <person name="Maat M.J."/>
            <person name="Mallet L."/>
            <person name="Mannhaupt G."/>
            <person name="Messenguy F."/>
            <person name="Miosga T."/>
            <person name="Molemans F."/>
            <person name="Mueller S."/>
            <person name="Nasr F."/>
            <person name="Obermaier B."/>
            <person name="Perea J."/>
            <person name="Pierard A."/>
            <person name="Piravandi E."/>
            <person name="Pohl F.M."/>
            <person name="Pohl T.M."/>
            <person name="Potier S."/>
            <person name="Proft M."/>
            <person name="Purnelle B."/>
            <person name="Ramezani Rad M."/>
            <person name="Rieger M."/>
            <person name="Rose M."/>
            <person name="Schaaff-Gerstenschlaeger I."/>
            <person name="Scherens B."/>
            <person name="Schwarzlose C."/>
            <person name="Skala J."/>
            <person name="Slonimski P.P."/>
            <person name="Smits P.H.M."/>
            <person name="Souciet J.-L."/>
            <person name="Steensma H.Y."/>
            <person name="Stucka R."/>
            <person name="Urrestarazu L.A."/>
            <person name="van der Aart Q.J.M."/>
            <person name="Van Dyck L."/>
            <person name="Vassarotti A."/>
            <person name="Vetter I."/>
            <person name="Vierendeels F."/>
            <person name="Vissers S."/>
            <person name="Wagner G."/>
            <person name="de Wergifosse P."/>
            <person name="Wolfe K.H."/>
            <person name="Zagulski M."/>
            <person name="Zimmermann F.K."/>
            <person name="Mewes H.-W."/>
            <person name="Kleine K."/>
        </authorList>
    </citation>
    <scope>NUCLEOTIDE SEQUENCE [LARGE SCALE GENOMIC DNA]</scope>
    <source>
        <strain>ATCC 204508 / S288c</strain>
    </source>
</reference>
<reference key="2">
    <citation type="journal article" date="2014" name="G3 (Bethesda)">
        <title>The reference genome sequence of Saccharomyces cerevisiae: Then and now.</title>
        <authorList>
            <person name="Engel S.R."/>
            <person name="Dietrich F.S."/>
            <person name="Fisk D.G."/>
            <person name="Binkley G."/>
            <person name="Balakrishnan R."/>
            <person name="Costanzo M.C."/>
            <person name="Dwight S.S."/>
            <person name="Hitz B.C."/>
            <person name="Karra K."/>
            <person name="Nash R.S."/>
            <person name="Weng S."/>
            <person name="Wong E.D."/>
            <person name="Lloyd P."/>
            <person name="Skrzypek M.S."/>
            <person name="Miyasato S.R."/>
            <person name="Simison M."/>
            <person name="Cherry J.M."/>
        </authorList>
    </citation>
    <scope>GENOME REANNOTATION</scope>
    <source>
        <strain>ATCC 204508 / S288c</strain>
    </source>
</reference>
<reference key="3">
    <citation type="journal article" date="2012" name="Science">
        <title>High-resolution view of the yeast meiotic program revealed by ribosome profiling.</title>
        <authorList>
            <person name="Brar G.A."/>
            <person name="Yassour M."/>
            <person name="Friedman N."/>
            <person name="Regev A."/>
            <person name="Ingolia N.T."/>
            <person name="Weissman J.S."/>
        </authorList>
    </citation>
    <scope>IDENTIFICATION</scope>
</reference>
<keyword id="KW-1185">Reference proteome</keyword>
<dbReference type="EMBL" id="BK006936">
    <property type="protein sequence ID" value="DAA35094.1"/>
    <property type="molecule type" value="Genomic_DNA"/>
</dbReference>
<dbReference type="BioGRID" id="36985">
    <property type="interactions" value="13"/>
</dbReference>
<dbReference type="STRING" id="4932.YBR056W-A"/>
<dbReference type="PaxDb" id="4932-YBR056W-A"/>
<dbReference type="PeptideAtlas" id="I2HB52"/>
<dbReference type="EnsemblFungi" id="YBR056W-A_mRNA">
    <property type="protein sequence ID" value="YBR056W-A"/>
    <property type="gene ID" value="YBR056W-A"/>
</dbReference>
<dbReference type="KEGG" id="sce:YBR056W-A"/>
<dbReference type="AGR" id="SGD:S000028736"/>
<dbReference type="SGD" id="S000028736">
    <property type="gene designation" value="YBR056W-A"/>
</dbReference>
<dbReference type="VEuPathDB" id="FungiDB:YBR056W-A"/>
<dbReference type="HOGENOM" id="CLU_2776517_0_0_1"/>
<dbReference type="InParanoid" id="I2HB52"/>
<dbReference type="OMA" id="CLFELCC"/>
<dbReference type="BioCyc" id="YEAST:G3O-29267-MONOMER"/>
<dbReference type="BioGRID-ORCS" id="1466443">
    <property type="hits" value="1 hit in 10 CRISPR screens"/>
</dbReference>
<dbReference type="PRO" id="PR:I2HB52"/>
<dbReference type="Proteomes" id="UP000002311">
    <property type="component" value="Chromosome II"/>
</dbReference>
<dbReference type="RNAct" id="I2HB52">
    <property type="molecule type" value="protein"/>
</dbReference>
<dbReference type="GO" id="GO:0005737">
    <property type="term" value="C:cytoplasm"/>
    <property type="evidence" value="ECO:0000314"/>
    <property type="project" value="SGD"/>
</dbReference>
<name>YB56A_YEAST</name>
<sequence>MRHQYYQPQPMYYQPQPQPIYIQQGPPPPRNDCCCCCNCGDCCSAIANVLCCLCLIDLCCSCAGGM</sequence>
<protein>
    <recommendedName>
        <fullName>Uncharacterized protein YBR056W-A</fullName>
    </recommendedName>
</protein>